<reference key="1">
    <citation type="journal article" date="2008" name="DNA Res.">
        <title>Comparative genome analysis of Lactobacillus reuteri and Lactobacillus fermentum reveal a genomic island for reuterin and cobalamin production.</title>
        <authorList>
            <person name="Morita H."/>
            <person name="Toh H."/>
            <person name="Fukuda S."/>
            <person name="Horikawa H."/>
            <person name="Oshima K."/>
            <person name="Suzuki T."/>
            <person name="Murakami M."/>
            <person name="Hisamatsu S."/>
            <person name="Kato Y."/>
            <person name="Takizawa T."/>
            <person name="Fukuoka H."/>
            <person name="Yoshimura T."/>
            <person name="Itoh K."/>
            <person name="O'Sullivan D.J."/>
            <person name="McKay L.L."/>
            <person name="Ohno H."/>
            <person name="Kikuchi J."/>
            <person name="Masaoka T."/>
            <person name="Hattori M."/>
        </authorList>
    </citation>
    <scope>NUCLEOTIDE SEQUENCE [LARGE SCALE GENOMIC DNA]</scope>
    <source>
        <strain>JCM 1112</strain>
    </source>
</reference>
<comment type="function">
    <text evidence="1">Negatively regulates transcription of bacterial ribonucleotide reductase nrd genes and operons by binding to NrdR-boxes.</text>
</comment>
<comment type="cofactor">
    <cofactor evidence="1">
        <name>Zn(2+)</name>
        <dbReference type="ChEBI" id="CHEBI:29105"/>
    </cofactor>
    <text evidence="1">Binds 1 zinc ion.</text>
</comment>
<comment type="similarity">
    <text evidence="1">Belongs to the NrdR family.</text>
</comment>
<keyword id="KW-0067">ATP-binding</keyword>
<keyword id="KW-0238">DNA-binding</keyword>
<keyword id="KW-0479">Metal-binding</keyword>
<keyword id="KW-0547">Nucleotide-binding</keyword>
<keyword id="KW-0678">Repressor</keyword>
<keyword id="KW-0804">Transcription</keyword>
<keyword id="KW-0805">Transcription regulation</keyword>
<keyword id="KW-0862">Zinc</keyword>
<keyword id="KW-0863">Zinc-finger</keyword>
<dbReference type="EMBL" id="AP007281">
    <property type="protein sequence ID" value="BAG25694.1"/>
    <property type="molecule type" value="Genomic_DNA"/>
</dbReference>
<dbReference type="RefSeq" id="WP_003668489.1">
    <property type="nucleotide sequence ID" value="NC_010609.1"/>
</dbReference>
<dbReference type="SMR" id="B2G8B2"/>
<dbReference type="GeneID" id="77191914"/>
<dbReference type="KEGG" id="lrf:LAR_1178"/>
<dbReference type="HOGENOM" id="CLU_108412_0_0_9"/>
<dbReference type="GO" id="GO:0005524">
    <property type="term" value="F:ATP binding"/>
    <property type="evidence" value="ECO:0007669"/>
    <property type="project" value="UniProtKB-KW"/>
</dbReference>
<dbReference type="GO" id="GO:0003677">
    <property type="term" value="F:DNA binding"/>
    <property type="evidence" value="ECO:0007669"/>
    <property type="project" value="UniProtKB-KW"/>
</dbReference>
<dbReference type="GO" id="GO:0008270">
    <property type="term" value="F:zinc ion binding"/>
    <property type="evidence" value="ECO:0007669"/>
    <property type="project" value="UniProtKB-UniRule"/>
</dbReference>
<dbReference type="GO" id="GO:0045892">
    <property type="term" value="P:negative regulation of DNA-templated transcription"/>
    <property type="evidence" value="ECO:0007669"/>
    <property type="project" value="UniProtKB-UniRule"/>
</dbReference>
<dbReference type="HAMAP" id="MF_00440">
    <property type="entry name" value="NrdR"/>
    <property type="match status" value="1"/>
</dbReference>
<dbReference type="InterPro" id="IPR005144">
    <property type="entry name" value="ATP-cone_dom"/>
</dbReference>
<dbReference type="InterPro" id="IPR055173">
    <property type="entry name" value="NrdR-like_N"/>
</dbReference>
<dbReference type="InterPro" id="IPR003796">
    <property type="entry name" value="RNR_NrdR-like"/>
</dbReference>
<dbReference type="NCBIfam" id="TIGR00244">
    <property type="entry name" value="transcriptional regulator NrdR"/>
    <property type="match status" value="1"/>
</dbReference>
<dbReference type="PANTHER" id="PTHR30455">
    <property type="entry name" value="TRANSCRIPTIONAL REPRESSOR NRDR"/>
    <property type="match status" value="1"/>
</dbReference>
<dbReference type="PANTHER" id="PTHR30455:SF2">
    <property type="entry name" value="TRANSCRIPTIONAL REPRESSOR NRDR"/>
    <property type="match status" value="1"/>
</dbReference>
<dbReference type="Pfam" id="PF03477">
    <property type="entry name" value="ATP-cone"/>
    <property type="match status" value="1"/>
</dbReference>
<dbReference type="Pfam" id="PF22811">
    <property type="entry name" value="Zn_ribbon_NrdR"/>
    <property type="match status" value="1"/>
</dbReference>
<dbReference type="PROSITE" id="PS51161">
    <property type="entry name" value="ATP_CONE"/>
    <property type="match status" value="1"/>
</dbReference>
<organism>
    <name type="scientific">Limosilactobacillus reuteri subsp. reuteri (strain JCM 1112)</name>
    <name type="common">Lactobacillus reuteri</name>
    <dbReference type="NCBI Taxonomy" id="557433"/>
    <lineage>
        <taxon>Bacteria</taxon>
        <taxon>Bacillati</taxon>
        <taxon>Bacillota</taxon>
        <taxon>Bacilli</taxon>
        <taxon>Lactobacillales</taxon>
        <taxon>Lactobacillaceae</taxon>
        <taxon>Limosilactobacillus</taxon>
    </lineage>
</organism>
<sequence length="154" mass="18022">MRCPHCHKNGSRVVDSRPSEDGSFIRRRRECIHCGFRFTTFERYEETPLLVIKKDGTRQEFSRQKILNGIVRSAEKRPVSMERLTKIADKVEKQIRSIGESEVSSQIIGKFVMNELKGVDEIAYIRFASVYRQFKDVDAFMSELETMMKAEHKK</sequence>
<evidence type="ECO:0000255" key="1">
    <source>
        <dbReference type="HAMAP-Rule" id="MF_00440"/>
    </source>
</evidence>
<feature type="chain" id="PRO_1000124518" description="Transcriptional repressor NrdR">
    <location>
        <begin position="1"/>
        <end position="154"/>
    </location>
</feature>
<feature type="domain" description="ATP-cone" evidence="1">
    <location>
        <begin position="49"/>
        <end position="139"/>
    </location>
</feature>
<feature type="zinc finger region" evidence="1">
    <location>
        <begin position="3"/>
        <end position="34"/>
    </location>
</feature>
<name>NRDR_LIMRJ</name>
<protein>
    <recommendedName>
        <fullName evidence="1">Transcriptional repressor NrdR</fullName>
    </recommendedName>
</protein>
<proteinExistence type="inferred from homology"/>
<accession>B2G8B2</accession>
<gene>
    <name evidence="1" type="primary">nrdR</name>
    <name type="ordered locus">LAR_1178</name>
</gene>